<gene>
    <name evidence="1" type="primary">dapD</name>
    <name type="ordered locus">BAB2_0991</name>
</gene>
<feature type="chain" id="PRO_1000047122" description="2,3,4,5-tetrahydropyridine-2,6-dicarboxylate N-succinyltransferase">
    <location>
        <begin position="1"/>
        <end position="284"/>
    </location>
</feature>
<feature type="binding site" evidence="1">
    <location>
        <position position="111"/>
    </location>
    <ligand>
        <name>substrate</name>
    </ligand>
</feature>
<feature type="binding site" evidence="1">
    <location>
        <position position="148"/>
    </location>
    <ligand>
        <name>substrate</name>
    </ligand>
</feature>
<proteinExistence type="inferred from homology"/>
<protein>
    <recommendedName>
        <fullName evidence="1">2,3,4,5-tetrahydropyridine-2,6-dicarboxylate N-succinyltransferase</fullName>
        <ecNumber evidence="1">2.3.1.117</ecNumber>
    </recommendedName>
    <alternativeName>
        <fullName evidence="1">Tetrahydrodipicolinate N-succinyltransferase</fullName>
        <shortName evidence="1">THDP succinyltransferase</shortName>
        <shortName evidence="1">THP succinyltransferase</shortName>
        <shortName evidence="1">Tetrahydropicolinate succinylase</shortName>
    </alternativeName>
</protein>
<evidence type="ECO:0000255" key="1">
    <source>
        <dbReference type="HAMAP-Rule" id="MF_00811"/>
    </source>
</evidence>
<reference key="1">
    <citation type="journal article" date="2005" name="Infect. Immun.">
        <title>Whole-genome analyses of speciation events in pathogenic Brucellae.</title>
        <authorList>
            <person name="Chain P.S."/>
            <person name="Comerci D.J."/>
            <person name="Tolmasky M.E."/>
            <person name="Larimer F.W."/>
            <person name="Malfatti S.A."/>
            <person name="Vergez L.M."/>
            <person name="Aguero F."/>
            <person name="Land M.L."/>
            <person name="Ugalde R.A."/>
            <person name="Garcia E."/>
        </authorList>
    </citation>
    <scope>NUCLEOTIDE SEQUENCE [LARGE SCALE GENOMIC DNA]</scope>
    <source>
        <strain>2308</strain>
    </source>
</reference>
<accession>Q2YJQ7</accession>
<sequence length="284" mass="30753">MTKPDLASLEKTIEKAFDERDGINTATRGEVREAVEQSLILLDRGEVRVAEKQADGNWHVNQWLKKAVLLSFRLNPMEVIKGGPGQSSWWDKVPSKFDGWTANEFEKAGFRAVPNCIVRHSAYIAPNAILMPSFVNLGAYVDKGAMIDTWATVGSCAQIGKNVHLSGGVGIGGVLEPMQAGPTIIEDNCFIGARSEVVEGCIVREGSVLGMGVFIGKSTKIVDRATGEVFYGEVPPYSVVVAGTMPGKNVPGENWGPSLYCAVIVKRADEKTRSKTSINELLRD</sequence>
<keyword id="KW-0012">Acyltransferase</keyword>
<keyword id="KW-0028">Amino-acid biosynthesis</keyword>
<keyword id="KW-0963">Cytoplasm</keyword>
<keyword id="KW-0220">Diaminopimelate biosynthesis</keyword>
<keyword id="KW-0457">Lysine biosynthesis</keyword>
<keyword id="KW-1185">Reference proteome</keyword>
<keyword id="KW-0677">Repeat</keyword>
<keyword id="KW-0808">Transferase</keyword>
<dbReference type="EC" id="2.3.1.117" evidence="1"/>
<dbReference type="EMBL" id="AM040265">
    <property type="protein sequence ID" value="CAJ13157.1"/>
    <property type="molecule type" value="Genomic_DNA"/>
</dbReference>
<dbReference type="RefSeq" id="WP_002965622.1">
    <property type="nucleotide sequence ID" value="NZ_KN046823.1"/>
</dbReference>
<dbReference type="SMR" id="Q2YJQ7"/>
<dbReference type="STRING" id="359391.BAB2_0991"/>
<dbReference type="GeneID" id="97534922"/>
<dbReference type="KEGG" id="bmf:BAB2_0991"/>
<dbReference type="PATRIC" id="fig|359391.11.peg.678"/>
<dbReference type="HOGENOM" id="CLU_050859_0_1_5"/>
<dbReference type="PhylomeDB" id="Q2YJQ7"/>
<dbReference type="UniPathway" id="UPA00034">
    <property type="reaction ID" value="UER00019"/>
</dbReference>
<dbReference type="Proteomes" id="UP000002719">
    <property type="component" value="Chromosome II"/>
</dbReference>
<dbReference type="GO" id="GO:0005737">
    <property type="term" value="C:cytoplasm"/>
    <property type="evidence" value="ECO:0007669"/>
    <property type="project" value="UniProtKB-SubCell"/>
</dbReference>
<dbReference type="GO" id="GO:0008666">
    <property type="term" value="F:2,3,4,5-tetrahydropyridine-2,6-dicarboxylate N-succinyltransferase activity"/>
    <property type="evidence" value="ECO:0007669"/>
    <property type="project" value="UniProtKB-UniRule"/>
</dbReference>
<dbReference type="GO" id="GO:0019877">
    <property type="term" value="P:diaminopimelate biosynthetic process"/>
    <property type="evidence" value="ECO:0007669"/>
    <property type="project" value="UniProtKB-UniRule"/>
</dbReference>
<dbReference type="GO" id="GO:0009089">
    <property type="term" value="P:lysine biosynthetic process via diaminopimelate"/>
    <property type="evidence" value="ECO:0007669"/>
    <property type="project" value="UniProtKB-UniRule"/>
</dbReference>
<dbReference type="CDD" id="cd03350">
    <property type="entry name" value="LbH_THP_succinylT"/>
    <property type="match status" value="1"/>
</dbReference>
<dbReference type="Gene3D" id="2.160.10.10">
    <property type="entry name" value="Hexapeptide repeat proteins"/>
    <property type="match status" value="1"/>
</dbReference>
<dbReference type="Gene3D" id="1.10.166.10">
    <property type="entry name" value="Tetrahydrodipicolinate-N-succinyltransferase, N-terminal domain"/>
    <property type="match status" value="1"/>
</dbReference>
<dbReference type="HAMAP" id="MF_00811">
    <property type="entry name" value="DapD"/>
    <property type="match status" value="1"/>
</dbReference>
<dbReference type="InterPro" id="IPR005664">
    <property type="entry name" value="DapD_Trfase_Hexpep_rpt_fam"/>
</dbReference>
<dbReference type="InterPro" id="IPR001451">
    <property type="entry name" value="Hexapep"/>
</dbReference>
<dbReference type="InterPro" id="IPR018357">
    <property type="entry name" value="Hexapep_transf_CS"/>
</dbReference>
<dbReference type="InterPro" id="IPR023180">
    <property type="entry name" value="THP_succinylTrfase_dom1"/>
</dbReference>
<dbReference type="InterPro" id="IPR037133">
    <property type="entry name" value="THP_succinylTrfase_N_sf"/>
</dbReference>
<dbReference type="InterPro" id="IPR050179">
    <property type="entry name" value="Trans_hexapeptide_repeat"/>
</dbReference>
<dbReference type="InterPro" id="IPR011004">
    <property type="entry name" value="Trimer_LpxA-like_sf"/>
</dbReference>
<dbReference type="NCBIfam" id="TIGR00965">
    <property type="entry name" value="dapD"/>
    <property type="match status" value="1"/>
</dbReference>
<dbReference type="NCBIfam" id="NF008808">
    <property type="entry name" value="PRK11830.1"/>
    <property type="match status" value="1"/>
</dbReference>
<dbReference type="PANTHER" id="PTHR43300:SF10">
    <property type="entry name" value="2,3,4,5-TETRAHYDROPYRIDINE-2,6-DICARBOXYLATE N-ACETYLTRANSFERASE"/>
    <property type="match status" value="1"/>
</dbReference>
<dbReference type="PANTHER" id="PTHR43300">
    <property type="entry name" value="ACETYLTRANSFERASE"/>
    <property type="match status" value="1"/>
</dbReference>
<dbReference type="Pfam" id="PF14602">
    <property type="entry name" value="Hexapep_2"/>
    <property type="match status" value="1"/>
</dbReference>
<dbReference type="Pfam" id="PF14805">
    <property type="entry name" value="THDPS_N_2"/>
    <property type="match status" value="1"/>
</dbReference>
<dbReference type="SUPFAM" id="SSF51161">
    <property type="entry name" value="Trimeric LpxA-like enzymes"/>
    <property type="match status" value="1"/>
</dbReference>
<dbReference type="PROSITE" id="PS00101">
    <property type="entry name" value="HEXAPEP_TRANSFERASES"/>
    <property type="match status" value="1"/>
</dbReference>
<organism>
    <name type="scientific">Brucella abortus (strain 2308)</name>
    <dbReference type="NCBI Taxonomy" id="359391"/>
    <lineage>
        <taxon>Bacteria</taxon>
        <taxon>Pseudomonadati</taxon>
        <taxon>Pseudomonadota</taxon>
        <taxon>Alphaproteobacteria</taxon>
        <taxon>Hyphomicrobiales</taxon>
        <taxon>Brucellaceae</taxon>
        <taxon>Brucella/Ochrobactrum group</taxon>
        <taxon>Brucella</taxon>
    </lineage>
</organism>
<comment type="catalytic activity">
    <reaction evidence="1">
        <text>(S)-2,3,4,5-tetrahydrodipicolinate + succinyl-CoA + H2O = (S)-2-succinylamino-6-oxoheptanedioate + CoA</text>
        <dbReference type="Rhea" id="RHEA:17325"/>
        <dbReference type="ChEBI" id="CHEBI:15377"/>
        <dbReference type="ChEBI" id="CHEBI:15685"/>
        <dbReference type="ChEBI" id="CHEBI:16845"/>
        <dbReference type="ChEBI" id="CHEBI:57287"/>
        <dbReference type="ChEBI" id="CHEBI:57292"/>
        <dbReference type="EC" id="2.3.1.117"/>
    </reaction>
</comment>
<comment type="pathway">
    <text evidence="1">Amino-acid biosynthesis; L-lysine biosynthesis via DAP pathway; LL-2,6-diaminopimelate from (S)-tetrahydrodipicolinate (succinylase route): step 1/3.</text>
</comment>
<comment type="subunit">
    <text evidence="1">Homotrimer.</text>
</comment>
<comment type="subcellular location">
    <subcellularLocation>
        <location evidence="1">Cytoplasm</location>
    </subcellularLocation>
</comment>
<comment type="similarity">
    <text evidence="1">Belongs to the transferase hexapeptide repeat family.</text>
</comment>
<name>DAPD_BRUA2</name>